<feature type="chain" id="PRO_1000101259" description="Glycine--tRNA ligase beta subunit">
    <location>
        <begin position="1"/>
        <end position="688"/>
    </location>
</feature>
<organism>
    <name type="scientific">Actinobacillus pleuropneumoniae serotype 7 (strain AP76)</name>
    <dbReference type="NCBI Taxonomy" id="537457"/>
    <lineage>
        <taxon>Bacteria</taxon>
        <taxon>Pseudomonadati</taxon>
        <taxon>Pseudomonadota</taxon>
        <taxon>Gammaproteobacteria</taxon>
        <taxon>Pasteurellales</taxon>
        <taxon>Pasteurellaceae</taxon>
        <taxon>Actinobacillus</taxon>
    </lineage>
</organism>
<name>SYGB_ACTP7</name>
<evidence type="ECO:0000255" key="1">
    <source>
        <dbReference type="HAMAP-Rule" id="MF_00255"/>
    </source>
</evidence>
<accession>B3GZ55</accession>
<gene>
    <name evidence="1" type="primary">glyS</name>
    <name type="ordered locus">APP7_1889</name>
</gene>
<sequence>MTTQNFLAEIGTEELPPKALKKLATAFAENVENELNQAGLSFEKVEWFAAPRRLAVKALGLATAQPSKKIEKRGPAVSAAFDADGKPTKAAEGWARGCGISVEQAERLATDKGEWLVHRAVIEGQPTKNLLVDIISRSLANLPIPKMMRWGDKTEQFVRPVHTVTLFFGGELIEGEILGVKIANVVRGHRFLGEREFTISHADEYLTALREKGSVIADFNERKALILAKSQEKATALGGVADIEEDLLDEVTSLVEFPNVLTAKFEERFLAVPAEALVYTMKGDQKYFPIYDKDGKLLPHFIFVSNINPEDPTAIIEGNEKVVRPRLTDAEFFFKTDLKQRLEDRLPRLETVLFQQQLGTLRDKTARIEALAGEIAAQIGADKAKAERAGLLSKCDLMTNMVFEFTDTQGVMGMHYARHDGEDEEVAVALNEQYMPRFAGDELPKSLVACSVALADKFDTLTGIFGIGQAPKGSADPFALRRAALGSLRIIVEKNLPLDLEDLVRKSAALFGDKLTNANVVDDVVDFMLGRFRAWYQDEGIAVDVIQAVLARRPTRPADFDARVRAVSHFRTLDSAEALAAANKRVSNILAKADVAIGEVNPTACVEPAEKALAEAVLGLRTEVQPLIAKGEYTAVLDKLASLRQPVDSFFDNVMVNAEDPALRQNRLAILNTLQGLFLQVADISLLQ</sequence>
<keyword id="KW-0030">Aminoacyl-tRNA synthetase</keyword>
<keyword id="KW-0067">ATP-binding</keyword>
<keyword id="KW-0963">Cytoplasm</keyword>
<keyword id="KW-0436">Ligase</keyword>
<keyword id="KW-0547">Nucleotide-binding</keyword>
<keyword id="KW-0648">Protein biosynthesis</keyword>
<comment type="catalytic activity">
    <reaction evidence="1">
        <text>tRNA(Gly) + glycine + ATP = glycyl-tRNA(Gly) + AMP + diphosphate</text>
        <dbReference type="Rhea" id="RHEA:16013"/>
        <dbReference type="Rhea" id="RHEA-COMP:9664"/>
        <dbReference type="Rhea" id="RHEA-COMP:9683"/>
        <dbReference type="ChEBI" id="CHEBI:30616"/>
        <dbReference type="ChEBI" id="CHEBI:33019"/>
        <dbReference type="ChEBI" id="CHEBI:57305"/>
        <dbReference type="ChEBI" id="CHEBI:78442"/>
        <dbReference type="ChEBI" id="CHEBI:78522"/>
        <dbReference type="ChEBI" id="CHEBI:456215"/>
        <dbReference type="EC" id="6.1.1.14"/>
    </reaction>
</comment>
<comment type="subunit">
    <text evidence="1">Tetramer of two alpha and two beta subunits.</text>
</comment>
<comment type="subcellular location">
    <subcellularLocation>
        <location evidence="1">Cytoplasm</location>
    </subcellularLocation>
</comment>
<comment type="similarity">
    <text evidence="1">Belongs to the class-II aminoacyl-tRNA synthetase family.</text>
</comment>
<reference key="1">
    <citation type="submission" date="2008-06" db="EMBL/GenBank/DDBJ databases">
        <title>Genome and proteome analysis of A. pleuropneumoniae serotype 7.</title>
        <authorList>
            <person name="Linke B."/>
            <person name="Buettner F."/>
            <person name="Martinez-Arias R."/>
            <person name="Goesmann A."/>
            <person name="Baltes N."/>
            <person name="Tegetmeyer H."/>
            <person name="Singh M."/>
            <person name="Gerlach G.F."/>
        </authorList>
    </citation>
    <scope>NUCLEOTIDE SEQUENCE [LARGE SCALE GENOMIC DNA]</scope>
    <source>
        <strain>AP76</strain>
    </source>
</reference>
<protein>
    <recommendedName>
        <fullName evidence="1">Glycine--tRNA ligase beta subunit</fullName>
        <ecNumber evidence="1">6.1.1.14</ecNumber>
    </recommendedName>
    <alternativeName>
        <fullName evidence="1">Glycyl-tRNA synthetase beta subunit</fullName>
        <shortName evidence="1">GlyRS</shortName>
    </alternativeName>
</protein>
<proteinExistence type="inferred from homology"/>
<dbReference type="EC" id="6.1.1.14" evidence="1"/>
<dbReference type="EMBL" id="CP001091">
    <property type="protein sequence ID" value="ACE62541.1"/>
    <property type="molecule type" value="Genomic_DNA"/>
</dbReference>
<dbReference type="RefSeq" id="WP_005618275.1">
    <property type="nucleotide sequence ID" value="NC_010939.1"/>
</dbReference>
<dbReference type="SMR" id="B3GZ55"/>
<dbReference type="KEGG" id="apa:APP7_1889"/>
<dbReference type="HOGENOM" id="CLU_007220_2_2_6"/>
<dbReference type="Proteomes" id="UP000001226">
    <property type="component" value="Chromosome"/>
</dbReference>
<dbReference type="GO" id="GO:0005829">
    <property type="term" value="C:cytosol"/>
    <property type="evidence" value="ECO:0007669"/>
    <property type="project" value="TreeGrafter"/>
</dbReference>
<dbReference type="GO" id="GO:0004814">
    <property type="term" value="F:arginine-tRNA ligase activity"/>
    <property type="evidence" value="ECO:0007669"/>
    <property type="project" value="InterPro"/>
</dbReference>
<dbReference type="GO" id="GO:0005524">
    <property type="term" value="F:ATP binding"/>
    <property type="evidence" value="ECO:0007669"/>
    <property type="project" value="UniProtKB-UniRule"/>
</dbReference>
<dbReference type="GO" id="GO:0004820">
    <property type="term" value="F:glycine-tRNA ligase activity"/>
    <property type="evidence" value="ECO:0007669"/>
    <property type="project" value="UniProtKB-UniRule"/>
</dbReference>
<dbReference type="GO" id="GO:0006420">
    <property type="term" value="P:arginyl-tRNA aminoacylation"/>
    <property type="evidence" value="ECO:0007669"/>
    <property type="project" value="InterPro"/>
</dbReference>
<dbReference type="GO" id="GO:0006426">
    <property type="term" value="P:glycyl-tRNA aminoacylation"/>
    <property type="evidence" value="ECO:0007669"/>
    <property type="project" value="UniProtKB-UniRule"/>
</dbReference>
<dbReference type="HAMAP" id="MF_00255">
    <property type="entry name" value="Gly_tRNA_synth_beta"/>
    <property type="match status" value="1"/>
</dbReference>
<dbReference type="InterPro" id="IPR008909">
    <property type="entry name" value="DALR_anticod-bd"/>
</dbReference>
<dbReference type="InterPro" id="IPR015944">
    <property type="entry name" value="Gly-tRNA-synth_bsu"/>
</dbReference>
<dbReference type="InterPro" id="IPR006194">
    <property type="entry name" value="Gly-tRNA-synth_heterodimer"/>
</dbReference>
<dbReference type="NCBIfam" id="TIGR00211">
    <property type="entry name" value="glyS"/>
    <property type="match status" value="1"/>
</dbReference>
<dbReference type="PANTHER" id="PTHR30075:SF2">
    <property type="entry name" value="GLYCINE--TRNA LIGASE, CHLOROPLASTIC_MITOCHONDRIAL 2"/>
    <property type="match status" value="1"/>
</dbReference>
<dbReference type="PANTHER" id="PTHR30075">
    <property type="entry name" value="GLYCYL-TRNA SYNTHETASE"/>
    <property type="match status" value="1"/>
</dbReference>
<dbReference type="Pfam" id="PF05746">
    <property type="entry name" value="DALR_1"/>
    <property type="match status" value="1"/>
</dbReference>
<dbReference type="Pfam" id="PF02092">
    <property type="entry name" value="tRNA_synt_2f"/>
    <property type="match status" value="1"/>
</dbReference>
<dbReference type="PRINTS" id="PR01045">
    <property type="entry name" value="TRNASYNTHGB"/>
</dbReference>
<dbReference type="SMART" id="SM00836">
    <property type="entry name" value="DALR_1"/>
    <property type="match status" value="1"/>
</dbReference>
<dbReference type="SUPFAM" id="SSF109604">
    <property type="entry name" value="HD-domain/PDEase-like"/>
    <property type="match status" value="1"/>
</dbReference>
<dbReference type="PROSITE" id="PS50861">
    <property type="entry name" value="AA_TRNA_LIGASE_II_GLYAB"/>
    <property type="match status" value="1"/>
</dbReference>